<gene>
    <name type="ordered locus">MJ0604</name>
</gene>
<name>Y604_METJA</name>
<dbReference type="EC" id="2.7.7.108" evidence="1"/>
<dbReference type="EMBL" id="L77117">
    <property type="protein sequence ID" value="AAB98594.1"/>
    <property type="molecule type" value="Genomic_DNA"/>
</dbReference>
<dbReference type="PIR" id="D64375">
    <property type="entry name" value="D64375"/>
</dbReference>
<dbReference type="RefSeq" id="WP_010870108.1">
    <property type="nucleotide sequence ID" value="NC_000909.1"/>
</dbReference>
<dbReference type="SMR" id="Q58021"/>
<dbReference type="STRING" id="243232.MJ_0604"/>
<dbReference type="PaxDb" id="243232-MJ_0604"/>
<dbReference type="EnsemblBacteria" id="AAB98594">
    <property type="protein sequence ID" value="AAB98594"/>
    <property type="gene ID" value="MJ_0604"/>
</dbReference>
<dbReference type="GeneID" id="1451469"/>
<dbReference type="KEGG" id="mja:MJ_0604"/>
<dbReference type="eggNOG" id="arCOG01195">
    <property type="taxonomic scope" value="Archaea"/>
</dbReference>
<dbReference type="HOGENOM" id="CLU_130257_3_2_2"/>
<dbReference type="InParanoid" id="Q58021"/>
<dbReference type="OrthoDB" id="9287at2157"/>
<dbReference type="PhylomeDB" id="Q58021"/>
<dbReference type="Proteomes" id="UP000000805">
    <property type="component" value="Chromosome"/>
</dbReference>
<dbReference type="GO" id="GO:0005524">
    <property type="term" value="F:ATP binding"/>
    <property type="evidence" value="ECO:0007669"/>
    <property type="project" value="UniProtKB-KW"/>
</dbReference>
<dbReference type="GO" id="GO:0046872">
    <property type="term" value="F:metal ion binding"/>
    <property type="evidence" value="ECO:0007669"/>
    <property type="project" value="UniProtKB-KW"/>
</dbReference>
<dbReference type="GO" id="GO:0016779">
    <property type="term" value="F:nucleotidyltransferase activity"/>
    <property type="evidence" value="ECO:0007669"/>
    <property type="project" value="UniProtKB-KW"/>
</dbReference>
<dbReference type="CDD" id="cd05403">
    <property type="entry name" value="NT_KNTase_like"/>
    <property type="match status" value="1"/>
</dbReference>
<dbReference type="Gene3D" id="3.30.460.10">
    <property type="entry name" value="Beta Polymerase, domain 2"/>
    <property type="match status" value="1"/>
</dbReference>
<dbReference type="InterPro" id="IPR043519">
    <property type="entry name" value="NT_sf"/>
</dbReference>
<dbReference type="InterPro" id="IPR002934">
    <property type="entry name" value="Polymerase_NTP_transf_dom"/>
</dbReference>
<dbReference type="InterPro" id="IPR052548">
    <property type="entry name" value="Type_VII_TA_antitoxin"/>
</dbReference>
<dbReference type="PANTHER" id="PTHR33933">
    <property type="entry name" value="NUCLEOTIDYLTRANSFERASE"/>
    <property type="match status" value="1"/>
</dbReference>
<dbReference type="PANTHER" id="PTHR33933:SF3">
    <property type="entry name" value="PROTEIN ADENYLYLTRANSFERASE MJ0604-RELATED"/>
    <property type="match status" value="1"/>
</dbReference>
<dbReference type="Pfam" id="PF01909">
    <property type="entry name" value="NTP_transf_2"/>
    <property type="match status" value="1"/>
</dbReference>
<dbReference type="SUPFAM" id="SSF81301">
    <property type="entry name" value="Nucleotidyltransferase"/>
    <property type="match status" value="1"/>
</dbReference>
<reference key="1">
    <citation type="journal article" date="1996" name="Science">
        <title>Complete genome sequence of the methanogenic archaeon, Methanococcus jannaschii.</title>
        <authorList>
            <person name="Bult C.J."/>
            <person name="White O."/>
            <person name="Olsen G.J."/>
            <person name="Zhou L."/>
            <person name="Fleischmann R.D."/>
            <person name="Sutton G.G."/>
            <person name="Blake J.A."/>
            <person name="FitzGerald L.M."/>
            <person name="Clayton R.A."/>
            <person name="Gocayne J.D."/>
            <person name="Kerlavage A.R."/>
            <person name="Dougherty B.A."/>
            <person name="Tomb J.-F."/>
            <person name="Adams M.D."/>
            <person name="Reich C.I."/>
            <person name="Overbeek R."/>
            <person name="Kirkness E.F."/>
            <person name="Weinstock K.G."/>
            <person name="Merrick J.M."/>
            <person name="Glodek A."/>
            <person name="Scott J.L."/>
            <person name="Geoghagen N.S.M."/>
            <person name="Weidman J.F."/>
            <person name="Fuhrmann J.L."/>
            <person name="Nguyen D."/>
            <person name="Utterback T.R."/>
            <person name="Kelley J.M."/>
            <person name="Peterson J.D."/>
            <person name="Sadow P.W."/>
            <person name="Hanna M.C."/>
            <person name="Cotton M.D."/>
            <person name="Roberts K.M."/>
            <person name="Hurst M.A."/>
            <person name="Kaine B.P."/>
            <person name="Borodovsky M."/>
            <person name="Klenk H.-P."/>
            <person name="Fraser C.M."/>
            <person name="Smith H.O."/>
            <person name="Woese C.R."/>
            <person name="Venter J.C."/>
        </authorList>
    </citation>
    <scope>NUCLEOTIDE SEQUENCE [LARGE SCALE GENOMIC DNA]</scope>
    <source>
        <strain>ATCC 43067 / DSM 2661 / JAL-1 / JCM 10045 / NBRC 100440</strain>
    </source>
</reference>
<keyword id="KW-0067">ATP-binding</keyword>
<keyword id="KW-0460">Magnesium</keyword>
<keyword id="KW-0479">Metal-binding</keyword>
<keyword id="KW-0547">Nucleotide-binding</keyword>
<keyword id="KW-0548">Nucleotidyltransferase</keyword>
<keyword id="KW-1185">Reference proteome</keyword>
<keyword id="KW-1277">Toxin-antitoxin system</keyword>
<keyword id="KW-0808">Transferase</keyword>
<evidence type="ECO:0000250" key="1">
    <source>
        <dbReference type="UniProtKB" id="A0A0B0QJN8"/>
    </source>
</evidence>
<evidence type="ECO:0000250" key="2">
    <source>
        <dbReference type="UniProtKB" id="Q8ECH7"/>
    </source>
</evidence>
<evidence type="ECO:0000305" key="3"/>
<organism>
    <name type="scientific">Methanocaldococcus jannaschii (strain ATCC 43067 / DSM 2661 / JAL-1 / JCM 10045 / NBRC 100440)</name>
    <name type="common">Methanococcus jannaschii</name>
    <dbReference type="NCBI Taxonomy" id="243232"/>
    <lineage>
        <taxon>Archaea</taxon>
        <taxon>Methanobacteriati</taxon>
        <taxon>Methanobacteriota</taxon>
        <taxon>Methanomada group</taxon>
        <taxon>Methanococci</taxon>
        <taxon>Methanococcales</taxon>
        <taxon>Methanocaldococcaceae</taxon>
        <taxon>Methanocaldococcus</taxon>
    </lineage>
</organism>
<sequence length="100" mass="11667">MNEEKAIKEFVNALKSKYRGRIKKIILFGSYARGDYTEESDIDILIVGDVDFDYVIDLCTKLLLKYGVVINAIVESEELFNKKINWSFHRNVLEEGRVLY</sequence>
<accession>Q58021</accession>
<feature type="chain" id="PRO_0000106953" description="Putative protein adenylyltransferase MJ0604">
    <location>
        <begin position="1"/>
        <end position="100"/>
    </location>
</feature>
<feature type="short sequence motif" description="GSX(10)DXD motif" evidence="2">
    <location>
        <begin position="29"/>
        <end position="43"/>
    </location>
</feature>
<feature type="binding site" evidence="2">
    <location>
        <position position="41"/>
    </location>
    <ligand>
        <name>Mg(2+)</name>
        <dbReference type="ChEBI" id="CHEBI:18420"/>
        <label>1</label>
    </ligand>
</feature>
<feature type="binding site" evidence="2">
    <location>
        <position position="41"/>
    </location>
    <ligand>
        <name>Mg(2+)</name>
        <dbReference type="ChEBI" id="CHEBI:18420"/>
        <label>2</label>
    </ligand>
</feature>
<feature type="binding site" evidence="2">
    <location>
        <position position="43"/>
    </location>
    <ligand>
        <name>Mg(2+)</name>
        <dbReference type="ChEBI" id="CHEBI:18420"/>
        <label>1</label>
    </ligand>
</feature>
<feature type="binding site" evidence="2">
    <location>
        <position position="43"/>
    </location>
    <ligand>
        <name>Mg(2+)</name>
        <dbReference type="ChEBI" id="CHEBI:18420"/>
        <label>2</label>
    </ligand>
</feature>
<protein>
    <recommendedName>
        <fullName>Putative protein adenylyltransferase MJ0604</fullName>
        <ecNumber evidence="1">2.7.7.108</ecNumber>
    </recommendedName>
    <alternativeName>
        <fullName>Putative antitoxin MJ0604</fullName>
    </alternativeName>
</protein>
<comment type="function">
    <text evidence="2">Putative antitoxin component of a putative type VII toxin-antitoxin (TA) system. Its cognate toxin might be MJ0605, which it might AMPylate.</text>
</comment>
<comment type="catalytic activity">
    <reaction evidence="2">
        <text>L-tyrosyl-[protein] + ATP = O-(5'-adenylyl)-L-tyrosyl-[protein] + diphosphate</text>
        <dbReference type="Rhea" id="RHEA:54288"/>
        <dbReference type="Rhea" id="RHEA-COMP:10136"/>
        <dbReference type="Rhea" id="RHEA-COMP:13846"/>
        <dbReference type="ChEBI" id="CHEBI:30616"/>
        <dbReference type="ChEBI" id="CHEBI:33019"/>
        <dbReference type="ChEBI" id="CHEBI:46858"/>
        <dbReference type="ChEBI" id="CHEBI:83624"/>
        <dbReference type="EC" id="2.7.7.108"/>
    </reaction>
</comment>
<comment type="catalytic activity">
    <reaction evidence="2">
        <text>O-(5'-adenylyl)-L-tyrosyl-[protein] + ATP = O-[5'-(adenylyl-(5'-&gt;3')-adenylyl)]-L-tyrosyl-[protein] + diphosphate</text>
        <dbReference type="Rhea" id="RHEA:66528"/>
        <dbReference type="Rhea" id="RHEA-COMP:13846"/>
        <dbReference type="Rhea" id="RHEA-COMP:17046"/>
        <dbReference type="ChEBI" id="CHEBI:30616"/>
        <dbReference type="ChEBI" id="CHEBI:33019"/>
        <dbReference type="ChEBI" id="CHEBI:83624"/>
        <dbReference type="ChEBI" id="CHEBI:167160"/>
    </reaction>
</comment>
<comment type="cofactor">
    <cofactor evidence="2">
        <name>Mg(2+)</name>
        <dbReference type="ChEBI" id="CHEBI:18420"/>
    </cofactor>
    <text evidence="2">Binds 2 Mg(2+) ions.</text>
</comment>
<comment type="similarity">
    <text evidence="3">Belongs to the MntA antitoxin family.</text>
</comment>
<proteinExistence type="inferred from homology"/>